<feature type="chain" id="PRO_0000069656" description="G-protein coupled receptor 176">
    <location>
        <begin position="1"/>
        <end position="515"/>
    </location>
</feature>
<feature type="topological domain" description="Extracellular" evidence="7">
    <location>
        <begin position="1"/>
        <end position="42"/>
    </location>
</feature>
<feature type="transmembrane region" description="Helical; Name=1" evidence="2">
    <location>
        <begin position="43"/>
        <end position="63"/>
    </location>
</feature>
<feature type="topological domain" description="Cytoplasmic" evidence="7">
    <location>
        <begin position="64"/>
        <end position="82"/>
    </location>
</feature>
<feature type="transmembrane region" description="Helical; Name=2" evidence="2">
    <location>
        <begin position="83"/>
        <end position="103"/>
    </location>
</feature>
<feature type="topological domain" description="Extracellular" evidence="7">
    <location>
        <begin position="104"/>
        <end position="118"/>
    </location>
</feature>
<feature type="transmembrane region" description="Helical; Name=3" evidence="2">
    <location>
        <begin position="119"/>
        <end position="139"/>
    </location>
</feature>
<feature type="topological domain" description="Cytoplasmic" evidence="7">
    <location>
        <begin position="140"/>
        <end position="160"/>
    </location>
</feature>
<feature type="transmembrane region" description="Helical; Name=4" evidence="2">
    <location>
        <begin position="161"/>
        <end position="181"/>
    </location>
</feature>
<feature type="topological domain" description="Extracellular" evidence="7">
    <location>
        <begin position="182"/>
        <end position="207"/>
    </location>
</feature>
<feature type="transmembrane region" description="Helical; Name=5" evidence="2">
    <location>
        <begin position="208"/>
        <end position="228"/>
    </location>
</feature>
<feature type="topological domain" description="Cytoplasmic" evidence="7">
    <location>
        <begin position="229"/>
        <end position="267"/>
    </location>
</feature>
<feature type="transmembrane region" description="Helical; Name=6" evidence="2">
    <location>
        <begin position="268"/>
        <end position="288"/>
    </location>
</feature>
<feature type="topological domain" description="Extracellular" evidence="7">
    <location>
        <begin position="289"/>
        <end position="299"/>
    </location>
</feature>
<feature type="transmembrane region" description="Helical; Name=7" evidence="2">
    <location>
        <begin position="300"/>
        <end position="320"/>
    </location>
</feature>
<feature type="topological domain" description="Cytoplasmic" evidence="7">
    <location>
        <begin position="321"/>
        <end position="515"/>
    </location>
</feature>
<feature type="region of interest" description="Disordered" evidence="4">
    <location>
        <begin position="1"/>
        <end position="20"/>
    </location>
</feature>
<feature type="compositionally biased region" description="Polar residues" evidence="4">
    <location>
        <begin position="1"/>
        <end position="16"/>
    </location>
</feature>
<feature type="glycosylation site" description="N-linked (GlcNAc...) asparagine" evidence="2">
    <location>
        <position position="4"/>
    </location>
</feature>
<feature type="glycosylation site" description="N-linked (GlcNAc...) asparagine" evidence="2">
    <location>
        <position position="11"/>
    </location>
</feature>
<feature type="glycosylation site" description="N-linked (GlcNAc...) asparagine" evidence="2">
    <location>
        <position position="17"/>
    </location>
</feature>
<feature type="glycosylation site" description="N-linked (GlcNAc...) asparagine" evidence="2">
    <location>
        <position position="27"/>
    </location>
</feature>
<feature type="splice variant" id="VSP_058845" description="In isoform 2." evidence="6">
    <original>MGHNGSWISPNASEPHNASGAEAAGVNRSALGEFGEAQLYRQFTTTVQVVIFIGSL</original>
    <variation>MPAPLLLISRT</variation>
    <location>
        <begin position="1"/>
        <end position="56"/>
    </location>
</feature>
<feature type="splice variant" id="VSP_058846" description="In isoform 3." evidence="5">
    <original>GNFMVLWSTCRTTVFKSVTNR</original>
    <variation>EFGNMEVTRKLDKSRLPGIK</variation>
    <location>
        <begin position="58"/>
        <end position="78"/>
    </location>
</feature>
<accession>Q14439</accession>
<accession>B4DZ23</accession>
<accession>H9NIL9</accession>
<accession>J3KNC6</accession>
<accession>Q6NXF6</accession>
<sequence>MGHNGSWISPNASEPHNASGAEAAGVNRSALGEFGEAQLYRQFTTTVQVVIFIGSLLGNFMVLWSTCRTTVFKSVTNRFIKNLACSGICASLVCVPFDIILSTSPHCCWWIYTMLFCKVVKFLHKVFCSVTILSFPAIALDRYYSVLYPLERKISDAKSRELVMYIWAHAVVASVPVFAVTNVADIYATSTCTEVWSNSLGHLVYVLVYNITTVIVPVVVVFLFLILIRRALSASQKKKVIIAALRTPQNTISIPYASQREAELHATLLSMVMVFILCSVPYATLVVYQTVLNVPDTSVFLLLTAVWLPKVSLLANPVLFLTVNKSVRKCLIGTLVQLHHRYSRRNVVSTGSGMAEASLEPSIRSGSQLLEMFHIGQQQIFKPTEDEEESEAKYIGSADFQAKEIFSTCLEGEQGPQFAPSAPPLSTVDSVSQVAPAAPVEPETFPDKYSLQFGFGPFELPPQWLSETRNSKKRLLPPLGNTPEELIQTKVPKVGRVERKMSRNNKVSIFPKVDS</sequence>
<protein>
    <recommendedName>
        <fullName>G-protein coupled receptor 176</fullName>
    </recommendedName>
    <alternativeName>
        <fullName>HB-954</fullName>
    </alternativeName>
</protein>
<proteinExistence type="evidence at protein level"/>
<organism>
    <name type="scientific">Homo sapiens</name>
    <name type="common">Human</name>
    <dbReference type="NCBI Taxonomy" id="9606"/>
    <lineage>
        <taxon>Eukaryota</taxon>
        <taxon>Metazoa</taxon>
        <taxon>Chordata</taxon>
        <taxon>Craniata</taxon>
        <taxon>Vertebrata</taxon>
        <taxon>Euteleostomi</taxon>
        <taxon>Mammalia</taxon>
        <taxon>Eutheria</taxon>
        <taxon>Euarchontoglires</taxon>
        <taxon>Primates</taxon>
        <taxon>Haplorrhini</taxon>
        <taxon>Catarrhini</taxon>
        <taxon>Hominidae</taxon>
        <taxon>Homo</taxon>
    </lineage>
</organism>
<gene>
    <name type="primary">GPR176</name>
</gene>
<dbReference type="EMBL" id="D38449">
    <property type="protein sequence ID" value="BAA07481.1"/>
    <property type="molecule type" value="mRNA"/>
</dbReference>
<dbReference type="EMBL" id="JQ308174">
    <property type="protein sequence ID" value="AFF59484.1"/>
    <property type="molecule type" value="mRNA"/>
</dbReference>
<dbReference type="EMBL" id="AK302715">
    <property type="protein sequence ID" value="BAG63935.1"/>
    <property type="molecule type" value="mRNA"/>
</dbReference>
<dbReference type="EMBL" id="AC012377">
    <property type="status" value="NOT_ANNOTATED_CDS"/>
    <property type="molecule type" value="Genomic_DNA"/>
</dbReference>
<dbReference type="EMBL" id="AC023908">
    <property type="status" value="NOT_ANNOTATED_CDS"/>
    <property type="molecule type" value="Genomic_DNA"/>
</dbReference>
<dbReference type="EMBL" id="CH471125">
    <property type="protein sequence ID" value="EAW92386.1"/>
    <property type="molecule type" value="Genomic_DNA"/>
</dbReference>
<dbReference type="EMBL" id="BC067106">
    <property type="protein sequence ID" value="AAH67106.1"/>
    <property type="molecule type" value="mRNA"/>
</dbReference>
<dbReference type="CCDS" id="CCDS10051.1">
    <molecule id="Q14439-1"/>
</dbReference>
<dbReference type="CCDS" id="CCDS61588.1">
    <molecule id="Q14439-2"/>
</dbReference>
<dbReference type="CCDS" id="CCDS61589.1">
    <molecule id="Q14439-3"/>
</dbReference>
<dbReference type="PIR" id="S53525">
    <property type="entry name" value="S53525"/>
</dbReference>
<dbReference type="RefSeq" id="NP_001258783.1">
    <molecule id="Q14439-3"/>
    <property type="nucleotide sequence ID" value="NM_001271854.2"/>
</dbReference>
<dbReference type="RefSeq" id="NP_001258784.1">
    <molecule id="Q14439-2"/>
    <property type="nucleotide sequence ID" value="NM_001271855.2"/>
</dbReference>
<dbReference type="RefSeq" id="NP_009154.1">
    <molecule id="Q14439-1"/>
    <property type="nucleotide sequence ID" value="NM_007223.3"/>
</dbReference>
<dbReference type="SMR" id="Q14439"/>
<dbReference type="BioGRID" id="116407">
    <property type="interactions" value="3"/>
</dbReference>
<dbReference type="FunCoup" id="Q14439">
    <property type="interactions" value="831"/>
</dbReference>
<dbReference type="IntAct" id="Q14439">
    <property type="interactions" value="2"/>
</dbReference>
<dbReference type="MINT" id="Q14439"/>
<dbReference type="STRING" id="9606.ENSP00000453076"/>
<dbReference type="ChEMBL" id="CHEMBL4523869"/>
<dbReference type="GlyCosmos" id="Q14439">
    <property type="glycosylation" value="4 sites, No reported glycans"/>
</dbReference>
<dbReference type="GlyGen" id="Q14439">
    <property type="glycosylation" value="4 sites"/>
</dbReference>
<dbReference type="iPTMnet" id="Q14439"/>
<dbReference type="PhosphoSitePlus" id="Q14439"/>
<dbReference type="BioMuta" id="GPR176"/>
<dbReference type="DMDM" id="74754475"/>
<dbReference type="jPOST" id="Q14439"/>
<dbReference type="MassIVE" id="Q14439"/>
<dbReference type="PaxDb" id="9606-ENSP00000453076"/>
<dbReference type="PeptideAtlas" id="Q14439"/>
<dbReference type="ProteomicsDB" id="5565"/>
<dbReference type="ProteomicsDB" id="59990"/>
<dbReference type="Antibodypedia" id="9997">
    <property type="antibodies" value="177 antibodies from 28 providers"/>
</dbReference>
<dbReference type="DNASU" id="11245"/>
<dbReference type="Ensembl" id="ENST00000299092.4">
    <molecule id="Q14439-3"/>
    <property type="protein sequence ID" value="ENSP00000299092.3"/>
    <property type="gene ID" value="ENSG00000166073.12"/>
</dbReference>
<dbReference type="Ensembl" id="ENST00000543580.7">
    <molecule id="Q14439-2"/>
    <property type="protein sequence ID" value="ENSP00000439361.1"/>
    <property type="gene ID" value="ENSG00000166073.12"/>
</dbReference>
<dbReference type="Ensembl" id="ENST00000561100.2">
    <molecule id="Q14439-1"/>
    <property type="protein sequence ID" value="ENSP00000453076.1"/>
    <property type="gene ID" value="ENSG00000166073.12"/>
</dbReference>
<dbReference type="GeneID" id="11245"/>
<dbReference type="KEGG" id="hsa:11245"/>
<dbReference type="MANE-Select" id="ENST00000561100.2">
    <property type="protein sequence ID" value="ENSP00000453076.1"/>
    <property type="RefSeq nucleotide sequence ID" value="NM_007223.3"/>
    <property type="RefSeq protein sequence ID" value="NP_009154.1"/>
</dbReference>
<dbReference type="UCSC" id="uc001zkj.3">
    <molecule id="Q14439-1"/>
    <property type="organism name" value="human"/>
</dbReference>
<dbReference type="UCSC" id="uc010uck.3">
    <property type="organism name" value="human"/>
</dbReference>
<dbReference type="AGR" id="HGNC:32370"/>
<dbReference type="CTD" id="11245"/>
<dbReference type="DisGeNET" id="11245"/>
<dbReference type="GeneCards" id="GPR176"/>
<dbReference type="HGNC" id="HGNC:32370">
    <property type="gene designation" value="GPR176"/>
</dbReference>
<dbReference type="HPA" id="ENSG00000166073">
    <property type="expression patterns" value="Tissue enhanced (brain)"/>
</dbReference>
<dbReference type="MIM" id="612183">
    <property type="type" value="gene"/>
</dbReference>
<dbReference type="neXtProt" id="NX_Q14439"/>
<dbReference type="OpenTargets" id="ENSG00000166073"/>
<dbReference type="PharmGKB" id="PA142671712"/>
<dbReference type="VEuPathDB" id="HostDB:ENSG00000166073"/>
<dbReference type="eggNOG" id="KOG3656">
    <property type="taxonomic scope" value="Eukaryota"/>
</dbReference>
<dbReference type="GeneTree" id="ENSGT00950000182998"/>
<dbReference type="InParanoid" id="Q14439"/>
<dbReference type="OMA" id="VTDIYAM"/>
<dbReference type="OrthoDB" id="9339792at2759"/>
<dbReference type="PAN-GO" id="Q14439">
    <property type="GO annotations" value="3 GO annotations based on evolutionary models"/>
</dbReference>
<dbReference type="PhylomeDB" id="Q14439"/>
<dbReference type="TreeFam" id="TF331506"/>
<dbReference type="PathwayCommons" id="Q14439"/>
<dbReference type="Reactome" id="R-HSA-418555">
    <property type="pathway name" value="G alpha (s) signalling events"/>
</dbReference>
<dbReference type="SignaLink" id="Q14439"/>
<dbReference type="BioGRID-ORCS" id="11245">
    <property type="hits" value="17 hits in 1146 CRISPR screens"/>
</dbReference>
<dbReference type="ChiTaRS" id="GPR176">
    <property type="organism name" value="human"/>
</dbReference>
<dbReference type="GeneWiki" id="GPR176"/>
<dbReference type="GenomeRNAi" id="11245"/>
<dbReference type="Pharos" id="Q14439">
    <property type="development level" value="Tbio"/>
</dbReference>
<dbReference type="PRO" id="PR:Q14439"/>
<dbReference type="Proteomes" id="UP000005640">
    <property type="component" value="Chromosome 15"/>
</dbReference>
<dbReference type="RNAct" id="Q14439">
    <property type="molecule type" value="protein"/>
</dbReference>
<dbReference type="Bgee" id="ENSG00000166073">
    <property type="expression patterns" value="Expressed in stromal cell of endometrium and 151 other cell types or tissues"/>
</dbReference>
<dbReference type="GO" id="GO:0005886">
    <property type="term" value="C:plasma membrane"/>
    <property type="evidence" value="ECO:0000250"/>
    <property type="project" value="UniProtKB"/>
</dbReference>
<dbReference type="GO" id="GO:0045202">
    <property type="term" value="C:synapse"/>
    <property type="evidence" value="ECO:0007669"/>
    <property type="project" value="GOC"/>
</dbReference>
<dbReference type="GO" id="GO:0004930">
    <property type="term" value="F:G protein-coupled receptor activity"/>
    <property type="evidence" value="ECO:0000250"/>
    <property type="project" value="UniProtKB"/>
</dbReference>
<dbReference type="GO" id="GO:0007193">
    <property type="term" value="P:adenylate cyclase-inhibiting G protein-coupled receptor signaling pathway"/>
    <property type="evidence" value="ECO:0007669"/>
    <property type="project" value="Ensembl"/>
</dbReference>
<dbReference type="GO" id="GO:0007268">
    <property type="term" value="P:chemical synaptic transmission"/>
    <property type="evidence" value="ECO:0000304"/>
    <property type="project" value="ProtInc"/>
</dbReference>
<dbReference type="GO" id="GO:0048512">
    <property type="term" value="P:circadian behavior"/>
    <property type="evidence" value="ECO:0000250"/>
    <property type="project" value="UniProtKB"/>
</dbReference>
<dbReference type="GO" id="GO:0007186">
    <property type="term" value="P:G protein-coupled receptor signaling pathway"/>
    <property type="evidence" value="ECO:0000250"/>
    <property type="project" value="UniProtKB"/>
</dbReference>
<dbReference type="CDD" id="cd15006">
    <property type="entry name" value="7tmA_GPR176"/>
    <property type="match status" value="1"/>
</dbReference>
<dbReference type="FunFam" id="1.20.1070.10:FF:000220">
    <property type="entry name" value="Probable G-protein coupled receptor 176"/>
    <property type="match status" value="1"/>
</dbReference>
<dbReference type="Gene3D" id="1.20.1070.10">
    <property type="entry name" value="Rhodopsin 7-helix transmembrane proteins"/>
    <property type="match status" value="1"/>
</dbReference>
<dbReference type="InterPro" id="IPR043523">
    <property type="entry name" value="GPCR_176_Rhodpsn_7TM"/>
</dbReference>
<dbReference type="InterPro" id="IPR000276">
    <property type="entry name" value="GPCR_Rhodpsn"/>
</dbReference>
<dbReference type="InterPro" id="IPR017452">
    <property type="entry name" value="GPCR_Rhodpsn_7TM"/>
</dbReference>
<dbReference type="PANTHER" id="PTHR22752">
    <property type="entry name" value="G PROTEIN-COUPLED RECEPTOR"/>
    <property type="match status" value="1"/>
</dbReference>
<dbReference type="PANTHER" id="PTHR22752:SF1">
    <property type="entry name" value="G-PROTEIN COUPLED RECEPTOR 176"/>
    <property type="match status" value="1"/>
</dbReference>
<dbReference type="Pfam" id="PF00001">
    <property type="entry name" value="7tm_1"/>
    <property type="match status" value="1"/>
</dbReference>
<dbReference type="PRINTS" id="PR00237">
    <property type="entry name" value="GPCRRHODOPSN"/>
</dbReference>
<dbReference type="SUPFAM" id="SSF81321">
    <property type="entry name" value="Family A G protein-coupled receptor-like"/>
    <property type="match status" value="1"/>
</dbReference>
<dbReference type="PROSITE" id="PS50262">
    <property type="entry name" value="G_PROTEIN_RECEP_F1_2"/>
    <property type="match status" value="1"/>
</dbReference>
<comment type="function">
    <text evidence="1">Orphan receptor involved in normal circadian rhythm behavior. Acts through the G-protein subclass G(z)-alpha and has an agonist-independent basal activity to repress cAMP production.</text>
</comment>
<comment type="subcellular location">
    <subcellularLocation>
        <location evidence="1">Cell membrane</location>
        <topology evidence="2">Multi-pass membrane protein</topology>
    </subcellularLocation>
</comment>
<comment type="alternative products">
    <event type="alternative splicing"/>
    <isoform>
        <id>Q14439-1</id>
        <name>1</name>
        <sequence type="displayed"/>
    </isoform>
    <isoform>
        <id>Q14439-2</id>
        <name>2</name>
        <sequence type="described" ref="VSP_058845"/>
    </isoform>
    <isoform>
        <id>Q14439-3</id>
        <name>3</name>
        <sequence type="described" ref="VSP_058846"/>
    </isoform>
</comment>
<comment type="similarity">
    <text evidence="3">Belongs to the G-protein coupled receptor 1 family.</text>
</comment>
<reference key="1">
    <citation type="journal article" date="1995" name="Biochim. Biophys. Acta">
        <title>cDNA cloning of a putative G protein-coupled receptor from brain.</title>
        <authorList>
            <person name="Hata S."/>
            <person name="Emi Y."/>
            <person name="Iyanagi T."/>
            <person name="Osumi T."/>
        </authorList>
    </citation>
    <scope>NUCLEOTIDE SEQUENCE [MRNA] (ISOFORM 1)</scope>
    <source>
        <tissue>Fetal brain</tissue>
    </source>
</reference>
<reference key="2">
    <citation type="submission" date="2011-12" db="EMBL/GenBank/DDBJ databases">
        <title>Isolation of cDNA coding for 8 human genes.</title>
        <authorList>
            <person name="Kaighin V.A."/>
            <person name="Martin A.L."/>
            <person name="Aronstam R.S."/>
        </authorList>
    </citation>
    <scope>NUCLEOTIDE SEQUENCE [MRNA] (ISOFORM 1)</scope>
</reference>
<reference key="3">
    <citation type="journal article" date="2004" name="Nat. Genet.">
        <title>Complete sequencing and characterization of 21,243 full-length human cDNAs.</title>
        <authorList>
            <person name="Ota T."/>
            <person name="Suzuki Y."/>
            <person name="Nishikawa T."/>
            <person name="Otsuki T."/>
            <person name="Sugiyama T."/>
            <person name="Irie R."/>
            <person name="Wakamatsu A."/>
            <person name="Hayashi K."/>
            <person name="Sato H."/>
            <person name="Nagai K."/>
            <person name="Kimura K."/>
            <person name="Makita H."/>
            <person name="Sekine M."/>
            <person name="Obayashi M."/>
            <person name="Nishi T."/>
            <person name="Shibahara T."/>
            <person name="Tanaka T."/>
            <person name="Ishii S."/>
            <person name="Yamamoto J."/>
            <person name="Saito K."/>
            <person name="Kawai Y."/>
            <person name="Isono Y."/>
            <person name="Nakamura Y."/>
            <person name="Nagahari K."/>
            <person name="Murakami K."/>
            <person name="Yasuda T."/>
            <person name="Iwayanagi T."/>
            <person name="Wagatsuma M."/>
            <person name="Shiratori A."/>
            <person name="Sudo H."/>
            <person name="Hosoiri T."/>
            <person name="Kaku Y."/>
            <person name="Kodaira H."/>
            <person name="Kondo H."/>
            <person name="Sugawara M."/>
            <person name="Takahashi M."/>
            <person name="Kanda K."/>
            <person name="Yokoi T."/>
            <person name="Furuya T."/>
            <person name="Kikkawa E."/>
            <person name="Omura Y."/>
            <person name="Abe K."/>
            <person name="Kamihara K."/>
            <person name="Katsuta N."/>
            <person name="Sato K."/>
            <person name="Tanikawa M."/>
            <person name="Yamazaki M."/>
            <person name="Ninomiya K."/>
            <person name="Ishibashi T."/>
            <person name="Yamashita H."/>
            <person name="Murakawa K."/>
            <person name="Fujimori K."/>
            <person name="Tanai H."/>
            <person name="Kimata M."/>
            <person name="Watanabe M."/>
            <person name="Hiraoka S."/>
            <person name="Chiba Y."/>
            <person name="Ishida S."/>
            <person name="Ono Y."/>
            <person name="Takiguchi S."/>
            <person name="Watanabe S."/>
            <person name="Yosida M."/>
            <person name="Hotuta T."/>
            <person name="Kusano J."/>
            <person name="Kanehori K."/>
            <person name="Takahashi-Fujii A."/>
            <person name="Hara H."/>
            <person name="Tanase T.-O."/>
            <person name="Nomura Y."/>
            <person name="Togiya S."/>
            <person name="Komai F."/>
            <person name="Hara R."/>
            <person name="Takeuchi K."/>
            <person name="Arita M."/>
            <person name="Imose N."/>
            <person name="Musashino K."/>
            <person name="Yuuki H."/>
            <person name="Oshima A."/>
            <person name="Sasaki N."/>
            <person name="Aotsuka S."/>
            <person name="Yoshikawa Y."/>
            <person name="Matsunawa H."/>
            <person name="Ichihara T."/>
            <person name="Shiohata N."/>
            <person name="Sano S."/>
            <person name="Moriya S."/>
            <person name="Momiyama H."/>
            <person name="Satoh N."/>
            <person name="Takami S."/>
            <person name="Terashima Y."/>
            <person name="Suzuki O."/>
            <person name="Nakagawa S."/>
            <person name="Senoh A."/>
            <person name="Mizoguchi H."/>
            <person name="Goto Y."/>
            <person name="Shimizu F."/>
            <person name="Wakebe H."/>
            <person name="Hishigaki H."/>
            <person name="Watanabe T."/>
            <person name="Sugiyama A."/>
            <person name="Takemoto M."/>
            <person name="Kawakami B."/>
            <person name="Yamazaki M."/>
            <person name="Watanabe K."/>
            <person name="Kumagai A."/>
            <person name="Itakura S."/>
            <person name="Fukuzumi Y."/>
            <person name="Fujimori Y."/>
            <person name="Komiyama M."/>
            <person name="Tashiro H."/>
            <person name="Tanigami A."/>
            <person name="Fujiwara T."/>
            <person name="Ono T."/>
            <person name="Yamada K."/>
            <person name="Fujii Y."/>
            <person name="Ozaki K."/>
            <person name="Hirao M."/>
            <person name="Ohmori Y."/>
            <person name="Kawabata A."/>
            <person name="Hikiji T."/>
            <person name="Kobatake N."/>
            <person name="Inagaki H."/>
            <person name="Ikema Y."/>
            <person name="Okamoto S."/>
            <person name="Okitani R."/>
            <person name="Kawakami T."/>
            <person name="Noguchi S."/>
            <person name="Itoh T."/>
            <person name="Shigeta K."/>
            <person name="Senba T."/>
            <person name="Matsumura K."/>
            <person name="Nakajima Y."/>
            <person name="Mizuno T."/>
            <person name="Morinaga M."/>
            <person name="Sasaki M."/>
            <person name="Togashi T."/>
            <person name="Oyama M."/>
            <person name="Hata H."/>
            <person name="Watanabe M."/>
            <person name="Komatsu T."/>
            <person name="Mizushima-Sugano J."/>
            <person name="Satoh T."/>
            <person name="Shirai Y."/>
            <person name="Takahashi Y."/>
            <person name="Nakagawa K."/>
            <person name="Okumura K."/>
            <person name="Nagase T."/>
            <person name="Nomura N."/>
            <person name="Kikuchi H."/>
            <person name="Masuho Y."/>
            <person name="Yamashita R."/>
            <person name="Nakai K."/>
            <person name="Yada T."/>
            <person name="Nakamura Y."/>
            <person name="Ohara O."/>
            <person name="Isogai T."/>
            <person name="Sugano S."/>
        </authorList>
    </citation>
    <scope>NUCLEOTIDE SEQUENCE [LARGE SCALE MRNA] (ISOFORM 2)</scope>
</reference>
<reference key="4">
    <citation type="journal article" date="2006" name="Nature">
        <title>Analysis of the DNA sequence and duplication history of human chromosome 15.</title>
        <authorList>
            <person name="Zody M.C."/>
            <person name="Garber M."/>
            <person name="Sharpe T."/>
            <person name="Young S.K."/>
            <person name="Rowen L."/>
            <person name="O'Neill K."/>
            <person name="Whittaker C.A."/>
            <person name="Kamal M."/>
            <person name="Chang J.L."/>
            <person name="Cuomo C.A."/>
            <person name="Dewar K."/>
            <person name="FitzGerald M.G."/>
            <person name="Kodira C.D."/>
            <person name="Madan A."/>
            <person name="Qin S."/>
            <person name="Yang X."/>
            <person name="Abbasi N."/>
            <person name="Abouelleil A."/>
            <person name="Arachchi H.M."/>
            <person name="Baradarani L."/>
            <person name="Birditt B."/>
            <person name="Bloom S."/>
            <person name="Bloom T."/>
            <person name="Borowsky M.L."/>
            <person name="Burke J."/>
            <person name="Butler J."/>
            <person name="Cook A."/>
            <person name="DeArellano K."/>
            <person name="DeCaprio D."/>
            <person name="Dorris L. III"/>
            <person name="Dors M."/>
            <person name="Eichler E.E."/>
            <person name="Engels R."/>
            <person name="Fahey J."/>
            <person name="Fleetwood P."/>
            <person name="Friedman C."/>
            <person name="Gearin G."/>
            <person name="Hall J.L."/>
            <person name="Hensley G."/>
            <person name="Johnson E."/>
            <person name="Jones C."/>
            <person name="Kamat A."/>
            <person name="Kaur A."/>
            <person name="Locke D.P."/>
            <person name="Madan A."/>
            <person name="Munson G."/>
            <person name="Jaffe D.B."/>
            <person name="Lui A."/>
            <person name="Macdonald P."/>
            <person name="Mauceli E."/>
            <person name="Naylor J.W."/>
            <person name="Nesbitt R."/>
            <person name="Nicol R."/>
            <person name="O'Leary S.B."/>
            <person name="Ratcliffe A."/>
            <person name="Rounsley S."/>
            <person name="She X."/>
            <person name="Sneddon K.M.B."/>
            <person name="Stewart S."/>
            <person name="Sougnez C."/>
            <person name="Stone S.M."/>
            <person name="Topham K."/>
            <person name="Vincent D."/>
            <person name="Wang S."/>
            <person name="Zimmer A.R."/>
            <person name="Birren B.W."/>
            <person name="Hood L."/>
            <person name="Lander E.S."/>
            <person name="Nusbaum C."/>
        </authorList>
    </citation>
    <scope>NUCLEOTIDE SEQUENCE [LARGE SCALE GENOMIC DNA]</scope>
</reference>
<reference key="5">
    <citation type="submission" date="2005-07" db="EMBL/GenBank/DDBJ databases">
        <authorList>
            <person name="Mural R.J."/>
            <person name="Istrail S."/>
            <person name="Sutton G.G."/>
            <person name="Florea L."/>
            <person name="Halpern A.L."/>
            <person name="Mobarry C.M."/>
            <person name="Lippert R."/>
            <person name="Walenz B."/>
            <person name="Shatkay H."/>
            <person name="Dew I."/>
            <person name="Miller J.R."/>
            <person name="Flanigan M.J."/>
            <person name="Edwards N.J."/>
            <person name="Bolanos R."/>
            <person name="Fasulo D."/>
            <person name="Halldorsson B.V."/>
            <person name="Hannenhalli S."/>
            <person name="Turner R."/>
            <person name="Yooseph S."/>
            <person name="Lu F."/>
            <person name="Nusskern D.R."/>
            <person name="Shue B.C."/>
            <person name="Zheng X.H."/>
            <person name="Zhong F."/>
            <person name="Delcher A.L."/>
            <person name="Huson D.H."/>
            <person name="Kravitz S.A."/>
            <person name="Mouchard L."/>
            <person name="Reinert K."/>
            <person name="Remington K.A."/>
            <person name="Clark A.G."/>
            <person name="Waterman M.S."/>
            <person name="Eichler E.E."/>
            <person name="Adams M.D."/>
            <person name="Hunkapiller M.W."/>
            <person name="Myers E.W."/>
            <person name="Venter J.C."/>
        </authorList>
    </citation>
    <scope>NUCLEOTIDE SEQUENCE [LARGE SCALE GENOMIC DNA]</scope>
</reference>
<reference key="6">
    <citation type="journal article" date="2004" name="Genome Res.">
        <title>The status, quality, and expansion of the NIH full-length cDNA project: the Mammalian Gene Collection (MGC).</title>
        <authorList>
            <consortium name="The MGC Project Team"/>
        </authorList>
    </citation>
    <scope>NUCLEOTIDE SEQUENCE [LARGE SCALE MRNA] (ISOFORM 3)</scope>
    <source>
        <tissue>Ovary</tissue>
    </source>
</reference>
<name>GP176_HUMAN</name>
<evidence type="ECO:0000250" key="1">
    <source>
        <dbReference type="UniProtKB" id="Q80WT4"/>
    </source>
</evidence>
<evidence type="ECO:0000255" key="2"/>
<evidence type="ECO:0000255" key="3">
    <source>
        <dbReference type="PROSITE-ProRule" id="PRU00521"/>
    </source>
</evidence>
<evidence type="ECO:0000256" key="4">
    <source>
        <dbReference type="SAM" id="MobiDB-lite"/>
    </source>
</evidence>
<evidence type="ECO:0000303" key="5">
    <source>
    </source>
</evidence>
<evidence type="ECO:0000303" key="6">
    <source ref="2"/>
</evidence>
<evidence type="ECO:0000305" key="7"/>
<keyword id="KW-0025">Alternative splicing</keyword>
<keyword id="KW-0090">Biological rhythms</keyword>
<keyword id="KW-1003">Cell membrane</keyword>
<keyword id="KW-0297">G-protein coupled receptor</keyword>
<keyword id="KW-0325">Glycoprotein</keyword>
<keyword id="KW-0472">Membrane</keyword>
<keyword id="KW-1267">Proteomics identification</keyword>
<keyword id="KW-0675">Receptor</keyword>
<keyword id="KW-1185">Reference proteome</keyword>
<keyword id="KW-0807">Transducer</keyword>
<keyword id="KW-0812">Transmembrane</keyword>
<keyword id="KW-1133">Transmembrane helix</keyword>